<proteinExistence type="inferred from homology"/>
<gene>
    <name evidence="1" type="primary">pncB</name>
    <name type="ordered locus">NMCC_1410</name>
</gene>
<protein>
    <recommendedName>
        <fullName evidence="1">Nicotinate phosphoribosyltransferase</fullName>
        <shortName evidence="1">NAPRTase</shortName>
        <ecNumber evidence="1">6.3.4.21</ecNumber>
    </recommendedName>
</protein>
<dbReference type="EC" id="6.3.4.21" evidence="1"/>
<dbReference type="EMBL" id="CP000381">
    <property type="protein sequence ID" value="ABX73579.1"/>
    <property type="molecule type" value="Genomic_DNA"/>
</dbReference>
<dbReference type="RefSeq" id="WP_002226219.1">
    <property type="nucleotide sequence ID" value="NC_010120.1"/>
</dbReference>
<dbReference type="SMR" id="A9M0T9"/>
<dbReference type="KEGG" id="nmn:NMCC_1410"/>
<dbReference type="HOGENOM" id="CLU_030991_1_0_4"/>
<dbReference type="UniPathway" id="UPA00253">
    <property type="reaction ID" value="UER00457"/>
</dbReference>
<dbReference type="Proteomes" id="UP000001177">
    <property type="component" value="Chromosome"/>
</dbReference>
<dbReference type="GO" id="GO:0005829">
    <property type="term" value="C:cytosol"/>
    <property type="evidence" value="ECO:0007669"/>
    <property type="project" value="TreeGrafter"/>
</dbReference>
<dbReference type="GO" id="GO:0004516">
    <property type="term" value="F:nicotinate phosphoribosyltransferase activity"/>
    <property type="evidence" value="ECO:0007669"/>
    <property type="project" value="UniProtKB-UniRule"/>
</dbReference>
<dbReference type="GO" id="GO:0034355">
    <property type="term" value="P:NAD biosynthetic process via the salvage pathway"/>
    <property type="evidence" value="ECO:0007669"/>
    <property type="project" value="TreeGrafter"/>
</dbReference>
<dbReference type="CDD" id="cd01401">
    <property type="entry name" value="PncB_like"/>
    <property type="match status" value="1"/>
</dbReference>
<dbReference type="FunFam" id="3.20.140.10:FF:000008">
    <property type="entry name" value="Nicotinate phosphoribosyltransferase"/>
    <property type="match status" value="1"/>
</dbReference>
<dbReference type="Gene3D" id="3.20.140.10">
    <property type="entry name" value="nicotinate phosphoribosyltransferase"/>
    <property type="match status" value="1"/>
</dbReference>
<dbReference type="HAMAP" id="MF_00570">
    <property type="entry name" value="NAPRTase"/>
    <property type="match status" value="1"/>
</dbReference>
<dbReference type="InterPro" id="IPR041525">
    <property type="entry name" value="N/Namide_PRibTrfase"/>
</dbReference>
<dbReference type="InterPro" id="IPR040727">
    <property type="entry name" value="NAPRTase_N"/>
</dbReference>
<dbReference type="InterPro" id="IPR006406">
    <property type="entry name" value="Nic_PRibTrfase"/>
</dbReference>
<dbReference type="InterPro" id="IPR007229">
    <property type="entry name" value="Nic_PRibTrfase-Fam"/>
</dbReference>
<dbReference type="InterPro" id="IPR036068">
    <property type="entry name" value="Nicotinate_pribotase-like_C"/>
</dbReference>
<dbReference type="NCBIfam" id="TIGR01514">
    <property type="entry name" value="NAPRTase"/>
    <property type="match status" value="1"/>
</dbReference>
<dbReference type="NCBIfam" id="NF003704">
    <property type="entry name" value="PRK05321.1"/>
    <property type="match status" value="1"/>
</dbReference>
<dbReference type="PANTHER" id="PTHR11098">
    <property type="entry name" value="NICOTINATE PHOSPHORIBOSYLTRANSFERASE"/>
    <property type="match status" value="1"/>
</dbReference>
<dbReference type="PANTHER" id="PTHR11098:SF1">
    <property type="entry name" value="NICOTINATE PHOSPHORIBOSYLTRANSFERASE"/>
    <property type="match status" value="1"/>
</dbReference>
<dbReference type="Pfam" id="PF04095">
    <property type="entry name" value="NAPRTase"/>
    <property type="match status" value="1"/>
</dbReference>
<dbReference type="Pfam" id="PF17767">
    <property type="entry name" value="NAPRTase_N"/>
    <property type="match status" value="1"/>
</dbReference>
<dbReference type="PIRSF" id="PIRSF000484">
    <property type="entry name" value="NAPRT"/>
    <property type="match status" value="1"/>
</dbReference>
<dbReference type="SUPFAM" id="SSF51690">
    <property type="entry name" value="Nicotinate/Quinolinate PRTase C-terminal domain-like"/>
    <property type="match status" value="1"/>
</dbReference>
<dbReference type="SUPFAM" id="SSF54675">
    <property type="entry name" value="Nicotinate/Quinolinate PRTase N-terminal domain-like"/>
    <property type="match status" value="1"/>
</dbReference>
<accession>A9M0T9</accession>
<feature type="chain" id="PRO_1000082325" description="Nicotinate phosphoribosyltransferase">
    <location>
        <begin position="1"/>
        <end position="402"/>
    </location>
</feature>
<feature type="modified residue" description="Phosphohistidine; by autocatalysis" evidence="1">
    <location>
        <position position="224"/>
    </location>
</feature>
<sequence>MTGIIHSLLDTDLYKFTMLQVVLHQFPQTHSLYEFRCRNASTVYPLADIKEDLEAELDALCRLRFTHDELGYLRSLRFIKSDFVDYLELFQLQRRFVEIGTDDKDRLNIRIEGPMIQAMFFEIFILAIVNELYFRRLETPAVIEEGERRLQAKAARLKEIAAAQNPDDPPFLISDFGTRRRYKLAWQEHVIRTLLEAAPSIVRGTSNVFLAKKLGITPIGTMAHEFLQAFQALDVRLRNFQKAALESWVHEYRGDLGVALTDVVGMDAFLRDFDLYFAKLFDGLRHDSGDPYVWGDKAYAHYQKLKIDSRTKMLTFSDGLDIERSWALHQYFKDRFKTGFGIGTNLTNDMGHTPLNIVLKLVECNGQSVAKLSDSPGKTMTNNSTFLAYLRQVFDVPEPETP</sequence>
<reference key="1">
    <citation type="journal article" date="2008" name="Genomics">
        <title>Characterization of ST-4821 complex, a unique Neisseria meningitidis clone.</title>
        <authorList>
            <person name="Peng J."/>
            <person name="Yang L."/>
            <person name="Yang F."/>
            <person name="Yang J."/>
            <person name="Yan Y."/>
            <person name="Nie H."/>
            <person name="Zhang X."/>
            <person name="Xiong Z."/>
            <person name="Jiang Y."/>
            <person name="Cheng F."/>
            <person name="Xu X."/>
            <person name="Chen S."/>
            <person name="Sun L."/>
            <person name="Li W."/>
            <person name="Shen Y."/>
            <person name="Shao Z."/>
            <person name="Liang X."/>
            <person name="Xu J."/>
            <person name="Jin Q."/>
        </authorList>
    </citation>
    <scope>NUCLEOTIDE SEQUENCE [LARGE SCALE GENOMIC DNA]</scope>
    <source>
        <strain>053442</strain>
    </source>
</reference>
<organism>
    <name type="scientific">Neisseria meningitidis serogroup C (strain 053442)</name>
    <dbReference type="NCBI Taxonomy" id="374833"/>
    <lineage>
        <taxon>Bacteria</taxon>
        <taxon>Pseudomonadati</taxon>
        <taxon>Pseudomonadota</taxon>
        <taxon>Betaproteobacteria</taxon>
        <taxon>Neisseriales</taxon>
        <taxon>Neisseriaceae</taxon>
        <taxon>Neisseria</taxon>
    </lineage>
</organism>
<comment type="function">
    <text evidence="1">Catalyzes the synthesis of beta-nicotinate D-ribonucleotide from nicotinate and 5-phospho-D-ribose 1-phosphate at the expense of ATP.</text>
</comment>
<comment type="catalytic activity">
    <reaction evidence="1">
        <text>nicotinate + 5-phospho-alpha-D-ribose 1-diphosphate + ATP + H2O = nicotinate beta-D-ribonucleotide + ADP + phosphate + diphosphate</text>
        <dbReference type="Rhea" id="RHEA:36163"/>
        <dbReference type="ChEBI" id="CHEBI:15377"/>
        <dbReference type="ChEBI" id="CHEBI:30616"/>
        <dbReference type="ChEBI" id="CHEBI:32544"/>
        <dbReference type="ChEBI" id="CHEBI:33019"/>
        <dbReference type="ChEBI" id="CHEBI:43474"/>
        <dbReference type="ChEBI" id="CHEBI:57502"/>
        <dbReference type="ChEBI" id="CHEBI:58017"/>
        <dbReference type="ChEBI" id="CHEBI:456216"/>
        <dbReference type="EC" id="6.3.4.21"/>
    </reaction>
</comment>
<comment type="pathway">
    <text evidence="1">Cofactor biosynthesis; NAD(+) biosynthesis; nicotinate D-ribonucleotide from nicotinate: step 1/1.</text>
</comment>
<comment type="PTM">
    <text evidence="1">Transiently phosphorylated on a His residue during the reaction cycle. Phosphorylation strongly increases the affinity for substrates and increases the rate of nicotinate D-ribonucleotide production. Dephosphorylation regenerates the low-affinity form of the enzyme, leading to product release.</text>
</comment>
<comment type="similarity">
    <text evidence="1">Belongs to the NAPRTase family.</text>
</comment>
<evidence type="ECO:0000255" key="1">
    <source>
        <dbReference type="HAMAP-Rule" id="MF_00570"/>
    </source>
</evidence>
<name>PNCB_NEIM0</name>
<keyword id="KW-0436">Ligase</keyword>
<keyword id="KW-0597">Phosphoprotein</keyword>
<keyword id="KW-0662">Pyridine nucleotide biosynthesis</keyword>